<keyword id="KW-0028">Amino-acid biosynthesis</keyword>
<keyword id="KW-0057">Aromatic amino acid biosynthesis</keyword>
<keyword id="KW-0963">Cytoplasm</keyword>
<keyword id="KW-0808">Transferase</keyword>
<name>AROA_STRPC</name>
<accession>Q1JL87</accession>
<reference key="1">
    <citation type="journal article" date="2006" name="Proc. Natl. Acad. Sci. U.S.A.">
        <title>Molecular genetic anatomy of inter- and intraserotype variation in the human bacterial pathogen group A Streptococcus.</title>
        <authorList>
            <person name="Beres S.B."/>
            <person name="Richter E.W."/>
            <person name="Nagiec M.J."/>
            <person name="Sumby P."/>
            <person name="Porcella S.F."/>
            <person name="DeLeo F.R."/>
            <person name="Musser J.M."/>
        </authorList>
    </citation>
    <scope>NUCLEOTIDE SEQUENCE [LARGE SCALE GENOMIC DNA]</scope>
    <source>
        <strain>MGAS9429</strain>
    </source>
</reference>
<feature type="chain" id="PRO_1000012492" description="3-phosphoshikimate 1-carboxyvinyltransferase">
    <location>
        <begin position="1"/>
        <end position="430"/>
    </location>
</feature>
<feature type="active site" description="Proton acceptor" evidence="1">
    <location>
        <position position="315"/>
    </location>
</feature>
<feature type="binding site" evidence="1">
    <location>
        <position position="23"/>
    </location>
    <ligand>
        <name>3-phosphoshikimate</name>
        <dbReference type="ChEBI" id="CHEBI:145989"/>
    </ligand>
</feature>
<feature type="binding site" evidence="1">
    <location>
        <position position="23"/>
    </location>
    <ligand>
        <name>phosphoenolpyruvate</name>
        <dbReference type="ChEBI" id="CHEBI:58702"/>
    </ligand>
</feature>
<feature type="binding site" evidence="1">
    <location>
        <position position="24"/>
    </location>
    <ligand>
        <name>3-phosphoshikimate</name>
        <dbReference type="ChEBI" id="CHEBI:145989"/>
    </ligand>
</feature>
<feature type="binding site" evidence="1">
    <location>
        <position position="28"/>
    </location>
    <ligand>
        <name>3-phosphoshikimate</name>
        <dbReference type="ChEBI" id="CHEBI:145989"/>
    </ligand>
</feature>
<feature type="binding site" evidence="1">
    <location>
        <position position="95"/>
    </location>
    <ligand>
        <name>phosphoenolpyruvate</name>
        <dbReference type="ChEBI" id="CHEBI:58702"/>
    </ligand>
</feature>
<feature type="binding site" evidence="1">
    <location>
        <position position="123"/>
    </location>
    <ligand>
        <name>phosphoenolpyruvate</name>
        <dbReference type="ChEBI" id="CHEBI:58702"/>
    </ligand>
</feature>
<feature type="binding site" evidence="1">
    <location>
        <position position="169"/>
    </location>
    <ligand>
        <name>3-phosphoshikimate</name>
        <dbReference type="ChEBI" id="CHEBI:145989"/>
    </ligand>
</feature>
<feature type="binding site" evidence="1">
    <location>
        <position position="171"/>
    </location>
    <ligand>
        <name>3-phosphoshikimate</name>
        <dbReference type="ChEBI" id="CHEBI:145989"/>
    </ligand>
</feature>
<feature type="binding site" evidence="1">
    <location>
        <position position="171"/>
    </location>
    <ligand>
        <name>phosphoenolpyruvate</name>
        <dbReference type="ChEBI" id="CHEBI:58702"/>
    </ligand>
</feature>
<feature type="binding site" evidence="1">
    <location>
        <position position="315"/>
    </location>
    <ligand>
        <name>3-phosphoshikimate</name>
        <dbReference type="ChEBI" id="CHEBI:145989"/>
    </ligand>
</feature>
<feature type="binding site" evidence="1">
    <location>
        <position position="342"/>
    </location>
    <ligand>
        <name>3-phosphoshikimate</name>
        <dbReference type="ChEBI" id="CHEBI:145989"/>
    </ligand>
</feature>
<feature type="binding site" evidence="1">
    <location>
        <position position="346"/>
    </location>
    <ligand>
        <name>phosphoenolpyruvate</name>
        <dbReference type="ChEBI" id="CHEBI:58702"/>
    </ligand>
</feature>
<feature type="binding site" evidence="1">
    <location>
        <position position="388"/>
    </location>
    <ligand>
        <name>phosphoenolpyruvate</name>
        <dbReference type="ChEBI" id="CHEBI:58702"/>
    </ligand>
</feature>
<proteinExistence type="inferred from homology"/>
<gene>
    <name evidence="1" type="primary">aroA</name>
    <name type="ordered locus">MGAS9429_Spy1145</name>
</gene>
<evidence type="ECO:0000255" key="1">
    <source>
        <dbReference type="HAMAP-Rule" id="MF_00210"/>
    </source>
</evidence>
<sequence>MKRMKLRTNAGPLQGTIQVPGDKSISHRAVILGAVAKGETRVKGLLKGEDVLSTIQAFRNLGVRIEEKDDQLVIEGQGFQGLTAPCQTLNMGNSGTSMRLIAGLLAGQPFSVKMIGDESLSKRPMDRIVYPLKQMGVEISGETDRQFPPLQLQGNRNLQPITYTLPISSAQVKSAILLAALQAKGTTQVVEKEITRNHTEEMIQQFGGRLIVDGKRITLVGPQQLTAQEITVPGDISSAAFWLVAGLIIPGSELLLKNVGVNPTRTGILEVVEKMGAQIVYEDMNKKEQVTSIRVVYSHLKGTIISGGLIPRLIDELPIIALLATQAQGTTCIKDAQELRVKETDRIQVVTDTLNSMGANIKATADGMIIKGPTVLYGANTSTYGDHRIGMMTAIAALLVKQGQVHLDKEEAIMTSYPTFFKDLERLCHD</sequence>
<comment type="function">
    <text evidence="1">Catalyzes the transfer of the enolpyruvyl moiety of phosphoenolpyruvate (PEP) to the 5-hydroxyl of shikimate-3-phosphate (S3P) to produce enolpyruvyl shikimate-3-phosphate and inorganic phosphate.</text>
</comment>
<comment type="catalytic activity">
    <reaction evidence="1">
        <text>3-phosphoshikimate + phosphoenolpyruvate = 5-O-(1-carboxyvinyl)-3-phosphoshikimate + phosphate</text>
        <dbReference type="Rhea" id="RHEA:21256"/>
        <dbReference type="ChEBI" id="CHEBI:43474"/>
        <dbReference type="ChEBI" id="CHEBI:57701"/>
        <dbReference type="ChEBI" id="CHEBI:58702"/>
        <dbReference type="ChEBI" id="CHEBI:145989"/>
        <dbReference type="EC" id="2.5.1.19"/>
    </reaction>
    <physiologicalReaction direction="left-to-right" evidence="1">
        <dbReference type="Rhea" id="RHEA:21257"/>
    </physiologicalReaction>
</comment>
<comment type="pathway">
    <text evidence="1">Metabolic intermediate biosynthesis; chorismate biosynthesis; chorismate from D-erythrose 4-phosphate and phosphoenolpyruvate: step 6/7.</text>
</comment>
<comment type="subunit">
    <text evidence="1">Monomer.</text>
</comment>
<comment type="subcellular location">
    <subcellularLocation>
        <location evidence="1">Cytoplasm</location>
    </subcellularLocation>
</comment>
<comment type="similarity">
    <text evidence="1">Belongs to the EPSP synthase family.</text>
</comment>
<protein>
    <recommendedName>
        <fullName evidence="1">3-phosphoshikimate 1-carboxyvinyltransferase</fullName>
        <ecNumber evidence="1">2.5.1.19</ecNumber>
    </recommendedName>
    <alternativeName>
        <fullName evidence="1">5-enolpyruvylshikimate-3-phosphate synthase</fullName>
        <shortName evidence="1">EPSP synthase</shortName>
        <shortName evidence="1">EPSPS</shortName>
    </alternativeName>
</protein>
<organism>
    <name type="scientific">Streptococcus pyogenes serotype M12 (strain MGAS9429)</name>
    <dbReference type="NCBI Taxonomy" id="370551"/>
    <lineage>
        <taxon>Bacteria</taxon>
        <taxon>Bacillati</taxon>
        <taxon>Bacillota</taxon>
        <taxon>Bacilli</taxon>
        <taxon>Lactobacillales</taxon>
        <taxon>Streptococcaceae</taxon>
        <taxon>Streptococcus</taxon>
    </lineage>
</organism>
<dbReference type="EC" id="2.5.1.19" evidence="1"/>
<dbReference type="EMBL" id="CP000259">
    <property type="protein sequence ID" value="ABF32332.1"/>
    <property type="molecule type" value="Genomic_DNA"/>
</dbReference>
<dbReference type="SMR" id="Q1JL87"/>
<dbReference type="KEGG" id="spk:MGAS9429_Spy1145"/>
<dbReference type="HOGENOM" id="CLU_024321_0_1_9"/>
<dbReference type="UniPathway" id="UPA00053">
    <property type="reaction ID" value="UER00089"/>
</dbReference>
<dbReference type="Proteomes" id="UP000002433">
    <property type="component" value="Chromosome"/>
</dbReference>
<dbReference type="GO" id="GO:0005737">
    <property type="term" value="C:cytoplasm"/>
    <property type="evidence" value="ECO:0007669"/>
    <property type="project" value="UniProtKB-SubCell"/>
</dbReference>
<dbReference type="GO" id="GO:0003866">
    <property type="term" value="F:3-phosphoshikimate 1-carboxyvinyltransferase activity"/>
    <property type="evidence" value="ECO:0007669"/>
    <property type="project" value="UniProtKB-UniRule"/>
</dbReference>
<dbReference type="GO" id="GO:0008652">
    <property type="term" value="P:amino acid biosynthetic process"/>
    <property type="evidence" value="ECO:0007669"/>
    <property type="project" value="UniProtKB-KW"/>
</dbReference>
<dbReference type="GO" id="GO:0009073">
    <property type="term" value="P:aromatic amino acid family biosynthetic process"/>
    <property type="evidence" value="ECO:0007669"/>
    <property type="project" value="UniProtKB-KW"/>
</dbReference>
<dbReference type="GO" id="GO:0009423">
    <property type="term" value="P:chorismate biosynthetic process"/>
    <property type="evidence" value="ECO:0007669"/>
    <property type="project" value="UniProtKB-UniRule"/>
</dbReference>
<dbReference type="CDD" id="cd01556">
    <property type="entry name" value="EPSP_synthase"/>
    <property type="match status" value="1"/>
</dbReference>
<dbReference type="FunFam" id="3.65.10.10:FF:000005">
    <property type="entry name" value="3-phosphoshikimate 1-carboxyvinyltransferase"/>
    <property type="match status" value="1"/>
</dbReference>
<dbReference type="FunFam" id="3.65.10.10:FF:000006">
    <property type="entry name" value="3-phosphoshikimate 1-carboxyvinyltransferase"/>
    <property type="match status" value="1"/>
</dbReference>
<dbReference type="Gene3D" id="3.65.10.10">
    <property type="entry name" value="Enolpyruvate transferase domain"/>
    <property type="match status" value="2"/>
</dbReference>
<dbReference type="HAMAP" id="MF_00210">
    <property type="entry name" value="EPSP_synth"/>
    <property type="match status" value="1"/>
</dbReference>
<dbReference type="InterPro" id="IPR001986">
    <property type="entry name" value="Enolpyruvate_Tfrase_dom"/>
</dbReference>
<dbReference type="InterPro" id="IPR036968">
    <property type="entry name" value="Enolpyruvate_Tfrase_sf"/>
</dbReference>
<dbReference type="InterPro" id="IPR006264">
    <property type="entry name" value="EPSP_synthase"/>
</dbReference>
<dbReference type="InterPro" id="IPR023193">
    <property type="entry name" value="EPSP_synthase_CS"/>
</dbReference>
<dbReference type="InterPro" id="IPR013792">
    <property type="entry name" value="RNA3'P_cycl/enolpyr_Trfase_a/b"/>
</dbReference>
<dbReference type="NCBIfam" id="TIGR01356">
    <property type="entry name" value="aroA"/>
    <property type="match status" value="1"/>
</dbReference>
<dbReference type="PANTHER" id="PTHR21090">
    <property type="entry name" value="AROM/DEHYDROQUINATE SYNTHASE"/>
    <property type="match status" value="1"/>
</dbReference>
<dbReference type="PANTHER" id="PTHR21090:SF5">
    <property type="entry name" value="PENTAFUNCTIONAL AROM POLYPEPTIDE"/>
    <property type="match status" value="1"/>
</dbReference>
<dbReference type="Pfam" id="PF00275">
    <property type="entry name" value="EPSP_synthase"/>
    <property type="match status" value="1"/>
</dbReference>
<dbReference type="PIRSF" id="PIRSF000505">
    <property type="entry name" value="EPSPS"/>
    <property type="match status" value="1"/>
</dbReference>
<dbReference type="SUPFAM" id="SSF55205">
    <property type="entry name" value="EPT/RTPC-like"/>
    <property type="match status" value="1"/>
</dbReference>
<dbReference type="PROSITE" id="PS00104">
    <property type="entry name" value="EPSP_SYNTHASE_1"/>
    <property type="match status" value="1"/>
</dbReference>
<dbReference type="PROSITE" id="PS00885">
    <property type="entry name" value="EPSP_SYNTHASE_2"/>
    <property type="match status" value="1"/>
</dbReference>